<name>EST1_PIG</name>
<protein>
    <recommendedName>
        <fullName>Liver carboxylesterase</fullName>
        <ecNumber>3.1.1.1</ecNumber>
    </recommendedName>
    <alternativeName>
        <fullName>Proline-beta-naphthylamidase</fullName>
    </alternativeName>
    <alternativeName>
        <fullName>Retinyl ester hydrolase</fullName>
        <shortName>REH</shortName>
    </alternativeName>
</protein>
<feature type="signal peptide" evidence="1">
    <location>
        <begin position="1"/>
        <end position="18"/>
    </location>
</feature>
<feature type="chain" id="PRO_0000008577" description="Liver carboxylesterase">
    <location>
        <begin position="19"/>
        <end position="566"/>
    </location>
</feature>
<feature type="short sequence motif" description="Prevents secretion from ER" evidence="3">
    <location>
        <begin position="563"/>
        <end position="566"/>
    </location>
</feature>
<feature type="active site" description="Acyl-ester intermediate" evidence="4">
    <location>
        <position position="222"/>
    </location>
</feature>
<feature type="active site" description="Charge relay system" evidence="1">
    <location>
        <position position="354"/>
    </location>
</feature>
<feature type="active site" description="Charge relay system" evidence="1">
    <location>
        <position position="467"/>
    </location>
</feature>
<feature type="modified residue" description="Phosphoserine" evidence="2">
    <location>
        <position position="379"/>
    </location>
</feature>
<feature type="glycosylation site" description="N-linked (GlcNAc...) asparagine" evidence="3">
    <location>
        <position position="80"/>
    </location>
</feature>
<feature type="disulfide bond" evidence="1">
    <location>
        <begin position="88"/>
        <end position="117"/>
    </location>
</feature>
<feature type="disulfide bond" evidence="1">
    <location>
        <begin position="274"/>
        <end position="285"/>
    </location>
</feature>
<feature type="sequence conflict" description="In Ref. 2; AAC70013." evidence="8" ref="2">
    <location>
        <position position="18"/>
    </location>
</feature>
<feature type="sequence conflict" description="In Ref. 3; AA sequence." evidence="8" ref="3">
    <original>P</original>
    <variation>D</variation>
    <location>
        <position position="25"/>
    </location>
</feature>
<feature type="sequence conflict" description="In Ref. 2; AAC70013." evidence="8" ref="2">
    <original>VE</original>
    <variation>AG</variation>
    <location>
        <begin position="94"/>
        <end position="95"/>
    </location>
</feature>
<feature type="sequence conflict" description="In Ref. 2; AAC70013." evidence="8" ref="2">
    <original>TL</original>
    <variation>IP</variation>
    <location>
        <begin position="110"/>
        <end position="111"/>
    </location>
</feature>
<feature type="sequence conflict" description="In Ref. 2; AAC70013." evidence="8" ref="2">
    <original>K</original>
    <variation>R</variation>
    <location>
        <position position="130"/>
    </location>
</feature>
<feature type="sequence conflict" description="In Ref. 2; AAC70013." evidence="8" ref="2">
    <original>L</original>
    <variation>V</variation>
    <location>
        <position position="147"/>
    </location>
</feature>
<feature type="sequence conflict" description="In Ref. 2; AAC70013." evidence="8" ref="2">
    <original>PM</original>
    <variation>ST</variation>
    <location>
        <begin position="151"/>
        <end position="152"/>
    </location>
</feature>
<feature type="sequence conflict" description="In Ref. 2; AAC70013." evidence="8" ref="2">
    <original>VV</original>
    <variation>LA</variation>
    <location>
        <begin position="156"/>
        <end position="157"/>
    </location>
</feature>
<feature type="sequence conflict" description="In Ref. 2; AAC70013." evidence="8" ref="2">
    <original>P</original>
    <variation>T</variation>
    <location>
        <position position="213"/>
    </location>
</feature>
<feature type="sequence conflict" description="In Ref. 2; AAC70013." evidence="8" ref="2">
    <original>VA</original>
    <variation>AG</variation>
    <location>
        <begin position="254"/>
        <end position="255"/>
    </location>
</feature>
<feature type="sequence conflict" description="In Ref. 2; AAC70013." evidence="8" ref="2">
    <original>F</original>
    <variation>L</variation>
    <location>
        <position position="308"/>
    </location>
</feature>
<feature type="sequence conflict" description="In Ref. 2; AAC70013." evidence="8" ref="2">
    <original>Q</original>
    <variation>P</variation>
    <location>
        <position position="312"/>
    </location>
</feature>
<feature type="sequence conflict" description="In Ref. 3; AA sequence." evidence="8" ref="3">
    <original>PT</original>
    <variation>AF</variation>
    <location>
        <begin position="320"/>
        <end position="321"/>
    </location>
</feature>
<feature type="sequence conflict" description="In Ref. 3; AA sequence." evidence="8" ref="3">
    <original>V</original>
    <variation>N</variation>
    <location>
        <position position="323"/>
    </location>
</feature>
<feature type="sequence conflict" description="In Ref. 3; AA sequence." evidence="8" ref="3">
    <original>S</original>
    <variation>R</variation>
    <location>
        <position position="384"/>
    </location>
</feature>
<feature type="sequence conflict" description="In Ref. 2; AAC70013." evidence="8" ref="2">
    <original>Y</original>
    <variation>F</variation>
    <location>
        <position position="385"/>
    </location>
</feature>
<feature type="sequence conflict" description="In Ref. 2; AAC70013." evidence="8" ref="2">
    <original>A</original>
    <variation>T</variation>
    <location>
        <position position="388"/>
    </location>
</feature>
<feature type="sequence conflict" description="In Ref. 3; AA sequence." evidence="8" ref="3">
    <original>T</original>
    <variation>A</variation>
    <location>
        <position position="399"/>
    </location>
</feature>
<feature type="strand" evidence="9">
    <location>
        <begin position="33"/>
        <end position="35"/>
    </location>
</feature>
<feature type="strand" evidence="9">
    <location>
        <begin position="37"/>
        <end position="40"/>
    </location>
</feature>
<feature type="strand" evidence="9">
    <location>
        <begin position="47"/>
        <end position="55"/>
    </location>
</feature>
<feature type="helix" evidence="9">
    <location>
        <begin position="62"/>
        <end position="64"/>
    </location>
</feature>
<feature type="strand" evidence="9">
    <location>
        <begin position="76"/>
        <end position="80"/>
    </location>
</feature>
<feature type="strand" evidence="9">
    <location>
        <begin position="87"/>
        <end position="89"/>
    </location>
</feature>
<feature type="helix" evidence="9">
    <location>
        <begin position="92"/>
        <end position="102"/>
    </location>
</feature>
<feature type="strand" evidence="9">
    <location>
        <begin position="105"/>
        <end position="107"/>
    </location>
</feature>
<feature type="strand" evidence="9">
    <location>
        <begin position="113"/>
        <end position="115"/>
    </location>
</feature>
<feature type="strand" evidence="9">
    <location>
        <begin position="119"/>
        <end position="124"/>
    </location>
</feature>
<feature type="strand" evidence="9">
    <location>
        <begin position="134"/>
        <end position="140"/>
    </location>
</feature>
<feature type="turn" evidence="9">
    <location>
        <begin position="144"/>
        <end position="146"/>
    </location>
</feature>
<feature type="helix" evidence="9">
    <location>
        <begin position="150"/>
        <end position="152"/>
    </location>
</feature>
<feature type="helix" evidence="9">
    <location>
        <begin position="156"/>
        <end position="162"/>
    </location>
</feature>
<feature type="strand" evidence="9">
    <location>
        <begin position="165"/>
        <end position="169"/>
    </location>
</feature>
<feature type="helix" evidence="9">
    <location>
        <begin position="174"/>
        <end position="178"/>
    </location>
</feature>
<feature type="helix" evidence="9">
    <location>
        <begin position="190"/>
        <end position="205"/>
    </location>
</feature>
<feature type="helix" evidence="9">
    <location>
        <begin position="206"/>
        <end position="209"/>
    </location>
</feature>
<feature type="strand" evidence="9">
    <location>
        <begin position="211"/>
        <end position="221"/>
    </location>
</feature>
<feature type="helix" evidence="9">
    <location>
        <begin position="223"/>
        <end position="233"/>
    </location>
</feature>
<feature type="helix" evidence="9">
    <location>
        <begin position="235"/>
        <end position="237"/>
    </location>
</feature>
<feature type="strand" evidence="9">
    <location>
        <begin position="242"/>
        <end position="248"/>
    </location>
</feature>
<feature type="helix" evidence="9">
    <location>
        <begin position="253"/>
        <end position="255"/>
    </location>
</feature>
<feature type="strand" evidence="9">
    <location>
        <begin position="257"/>
        <end position="259"/>
    </location>
</feature>
<feature type="helix" evidence="9">
    <location>
        <begin position="262"/>
        <end position="272"/>
    </location>
</feature>
<feature type="helix" evidence="9">
    <location>
        <begin position="279"/>
        <end position="288"/>
    </location>
</feature>
<feature type="helix" evidence="9">
    <location>
        <begin position="291"/>
        <end position="301"/>
    </location>
</feature>
<feature type="turn" evidence="9">
    <location>
        <begin position="302"/>
        <end position="304"/>
    </location>
</feature>
<feature type="strand" evidence="9">
    <location>
        <begin position="308"/>
        <end position="310"/>
    </location>
</feature>
<feature type="helix" evidence="9">
    <location>
        <begin position="312"/>
        <end position="314"/>
    </location>
</feature>
<feature type="strand" evidence="9">
    <location>
        <begin position="325"/>
        <end position="327"/>
    </location>
</feature>
<feature type="helix" evidence="9">
    <location>
        <begin position="332"/>
        <end position="338"/>
    </location>
</feature>
<feature type="strand" evidence="9">
    <location>
        <begin position="346"/>
        <end position="351"/>
    </location>
</feature>
<feature type="helix" evidence="9">
    <location>
        <begin position="358"/>
        <end position="362"/>
    </location>
</feature>
<feature type="helix" evidence="9">
    <location>
        <begin position="374"/>
        <end position="383"/>
    </location>
</feature>
<feature type="helix" evidence="9">
    <location>
        <begin position="385"/>
        <end position="388"/>
    </location>
</feature>
<feature type="helix" evidence="9">
    <location>
        <begin position="392"/>
        <end position="394"/>
    </location>
</feature>
<feature type="helix" evidence="9">
    <location>
        <begin position="395"/>
        <end position="403"/>
    </location>
</feature>
<feature type="helix" evidence="9">
    <location>
        <begin position="409"/>
        <end position="424"/>
    </location>
</feature>
<feature type="helix" evidence="9">
    <location>
        <begin position="426"/>
        <end position="438"/>
    </location>
</feature>
<feature type="strand" evidence="9">
    <location>
        <begin position="443"/>
        <end position="449"/>
    </location>
</feature>
<feature type="helix" evidence="9">
    <location>
        <begin position="469"/>
        <end position="474"/>
    </location>
</feature>
<feature type="helix" evidence="9">
    <location>
        <begin position="477"/>
        <end position="479"/>
    </location>
</feature>
<feature type="helix" evidence="9">
    <location>
        <begin position="486"/>
        <end position="505"/>
    </location>
</feature>
<feature type="strand" evidence="9">
    <location>
        <begin position="524"/>
        <end position="531"/>
    </location>
</feature>
<feature type="strand" evidence="9">
    <location>
        <begin position="533"/>
        <end position="536"/>
    </location>
</feature>
<feature type="helix" evidence="9">
    <location>
        <begin position="540"/>
        <end position="549"/>
    </location>
</feature>
<sequence>MWLLPLVLTSLASSATWAGQPASPPVVDTAQGRVLGKYVSLEGLAQPVAVFLGVPFAKPPLGSLRFAPPQPAEPWSFVKNTTSYPPMCCQDPVVEQMTSDLFTNGKERLTLEFSEDCLYLNIYTPADLTKRGRLPVMVWIHGGGLVLGGAPMYDGVVLAAHENVVVVAIQYRLGIWGFFSTGDEHSRGNWGHLDQVAALHWVQENIANFGGDPGSVTIFGESAGGESVSVLVLSPLAKNLFHRAISESGVALTVALVRKDMKAAAKQIAVLAGCKTTTSAVFVHCLRQKSEDELLDLTLKMKFLTLDFHGDQRESHPFLPTVVDGVLLPKMPEEILAEKDFNTVPYIVGINKQEFGWLLPTMMGFPLSEGKLDQKTATSLLWKSYPIANIPEELTPVATDKYLGGTDDPVKKKDLFLDLMGDVVFGVPSVTVARQHRDAGAPTYMYEFQYRPSFSSDKKPKTVIGDHGDEIFSVFGFPLLKGDAPEEEVSLSKTVMKFWANFARSGNPNGEGLPHWPMYDQEEGYLQIGVNTQAAKRLKGEEVAFWNDLLSKEAAKKPPKIKHAEL</sequence>
<evidence type="ECO:0000250" key="1"/>
<evidence type="ECO:0000250" key="2">
    <source>
        <dbReference type="UniProtKB" id="P23141"/>
    </source>
</evidence>
<evidence type="ECO:0000255" key="3"/>
<evidence type="ECO:0000255" key="4">
    <source>
        <dbReference type="PROSITE-ProRule" id="PRU10039"/>
    </source>
</evidence>
<evidence type="ECO:0000269" key="5">
    <source>
    </source>
</evidence>
<evidence type="ECO:0000269" key="6">
    <source>
    </source>
</evidence>
<evidence type="ECO:0000269" key="7">
    <source>
    </source>
</evidence>
<evidence type="ECO:0000305" key="8"/>
<evidence type="ECO:0007829" key="9">
    <source>
        <dbReference type="PDB" id="5FV4"/>
    </source>
</evidence>
<keyword id="KW-0002">3D-structure</keyword>
<keyword id="KW-0903">Direct protein sequencing</keyword>
<keyword id="KW-1015">Disulfide bond</keyword>
<keyword id="KW-0256">Endoplasmic reticulum</keyword>
<keyword id="KW-0325">Glycoprotein</keyword>
<keyword id="KW-0378">Hydrolase</keyword>
<keyword id="KW-0597">Phosphoprotein</keyword>
<keyword id="KW-1185">Reference proteome</keyword>
<keyword id="KW-0719">Serine esterase</keyword>
<keyword id="KW-0732">Signal</keyword>
<proteinExistence type="evidence at protein level"/>
<comment type="function">
    <text evidence="5 6 7">Involved in the detoxification of xenobiotics and in the activation of ester and amide prodrugs. Active towards triacylglycerides containing short-chain fatty acids from C2 to C6, and 1(3)-monoacylglycerols containing fatty acids from C2 to C12. Inactive on long-chain triacylglycerols and diacylglycerol. Hydrolyzes aromatic and alkyl esters and vitamin A acetate. The hydrolysis rate depends upon the amino acid promoiety and the esterification site of the prodrug. Aromatic promoieties are favored, highest rates are observed with phenylalanyl progdrugs, hydrolysis of valyl and isoleucyl prodrugs is less efficient. With floxuridine prodrugs, activity is higher on 5' monoesters than on 3' monoesters. With gemcitabine prodrugs, activity is higher on 3' monoesters than on 5' monoesters.</text>
</comment>
<comment type="catalytic activity">
    <reaction evidence="4 5 6 7">
        <text>a carboxylic ester + H2O = an alcohol + a carboxylate + H(+)</text>
        <dbReference type="Rhea" id="RHEA:21164"/>
        <dbReference type="ChEBI" id="CHEBI:15377"/>
        <dbReference type="ChEBI" id="CHEBI:15378"/>
        <dbReference type="ChEBI" id="CHEBI:29067"/>
        <dbReference type="ChEBI" id="CHEBI:30879"/>
        <dbReference type="ChEBI" id="CHEBI:33308"/>
        <dbReference type="EC" id="3.1.1.1"/>
    </reaction>
</comment>
<comment type="activity regulation">
    <text evidence="6 7">Activated by CHAPS at concentrations of up to 130 mM, higher concentrations reduce activity. In the presence of CHAPS, activity is stimulated by non-ionic detergents. Inhibited by the esterase inhibitors diisopropylfluorophosphate and phenylmethylsulfonyl fluoride.</text>
</comment>
<comment type="biophysicochemical properties">
    <kinetics>
        <KM evidence="5 6 7">27.5 uM for retinyl palmitate</KM>
        <KM evidence="5 6 7">0.46 mM for 5'-L-phenylalanyl-floxuridine</KM>
        <KM evidence="5 6 7">0.44 mM for 5'-D-phenylalanyl-floxuridine</KM>
        <KM evidence="5 6 7">1.4 mM for 3'-D-phenylalanyl-floxuridine</KM>
        <KM evidence="5 6 7">0.74 mM for 3'-L-phenylalanyl-floxuridine</KM>
        <KM evidence="5 6 7">1.87 mM for 5'-L-prolyl-floxuridine</KM>
        <KM evidence="5 6 7">0.97 mM for 5'-L-leucyl-floxuridine</KM>
        <KM evidence="5 6 7">4.85 mM for 3'-L-prolyl-floxuridine</KM>
        <KM evidence="5 6 7">1.46 mM for 3'-L-leucyl-floxuridine</KM>
        <KM evidence="5 6 7">3.08 mM for 3'-L-lysyl-floxuridine</KM>
        <KM evidence="5 6 7">6.25 mM for 5'-L-lysyl-floxuridine</KM>
        <KM evidence="5 6 7">1.11 mM for 3'-L-isoleucyl-floxuridine</KM>
        <KM evidence="5 6 7">3 mM for 5'-L-aspartyl-floxuridine</KM>
        <KM evidence="5 6 7">0.93 mM for 3'-L-aspartyl-floxuridine</KM>
        <KM evidence="5 6 7">4.12 mM for 5'-D-valyl-floxuridine</KM>
        <KM evidence="5 6 7">2.87 mM for 3'-L-valyl-floxuridine</KM>
        <KM evidence="5 6 7">3.58 mM for 5'-L-valyl-floxuridine</KM>
        <KM evidence="5 6 7">2.94 mM for 5'-L-isoleucyl-floxuridine</KM>
        <KM evidence="5 6 7">11.23 mM for 3'-D-valyl-floxuridine</KM>
        <KM evidence="5 6 7">0.51 mM for 3'-L-phenylalanyl-gemcitabine</KM>
        <KM evidence="5 6 7">0.97 mM for 3'-D-phenylalanyl-gemcitabine</KM>
        <KM evidence="5 6 7">0.17 mM for 5'-L-phenylalanyl-gemcitabine</KM>
        <KM evidence="5 6 7">0.22 mM for 5'-D-phenylalanyl-gemcitabine</KM>
        <KM evidence="5 6 7">0.9 mM for 3'-L-valyl-gemcitabine</KM>
        <KM evidence="5 6 7">0.94 mM for 3'-L-isoleucyl-gemcitabine</KM>
        <KM evidence="5 6 7">1.43 mM for 3'-D-valyl-gemcitabine</KM>
        <KM evidence="5 6 7">0.85 mM for 5'-L-isoleucyl-gemcitabine</KM>
        <KM evidence="5 6 7">1.16 mM for 5'-D-valyl-gemcitabine</KM>
        <KM evidence="5 6 7">0.96 mM for 5'-L-valyl-gemcitabine</KM>
        <KM evidence="5 6 7">0.91 mM for 5'-L-phenylalanyl-BDCRB</KM>
        <KM evidence="5 6 7">0.9 mM for 5'-D-phenylalanyl-BDCRB</KM>
        <KM evidence="5 6 7">0.14 mM for pNPB</KM>
        <KM evidence="5 6 7">0.52 mM for pNPA</KM>
        <KM evidence="5 6 7">1.18 mM for PHEE</KM>
        <KM evidence="5 6 7">0.08 mM for PHBE</KM>
        <KM evidence="5 6 7">0.4 mM for AcPHEE</KM>
        <KM evidence="5 6 7">0.63 mM for 5' cinn-floxuridine</KM>
        <KM evidence="5 6 7">4.21 mM for CPT-11</KM>
        <KM evidence="5 6 7">8.81 mM for VACV</KM>
        <Vmax evidence="5 6 7">530.0 nmol/h/mg enzyme with retinyl palmitate as substrate</Vmax>
        <Vmax evidence="5 6 7">1.82 nmol/min/ug enzyme with 5'-L-phenylalanyl-floxuridine as substrate</Vmax>
        <Vmax evidence="5 6 7">1.63 nmol/min/ug enzyme with 5'-D-phenylalanyl-floxuridine as substrate</Vmax>
        <Vmax evidence="5 6 7">4.05 nmol/min/ug enzyme with 3'-D-phenylalanyl-floxuridine as substrate</Vmax>
        <Vmax evidence="5 6 7">1.55 nmol/min/ug enzyme with 3'-L-phenylalanyl-floxuridine as substrate</Vmax>
        <Vmax evidence="5 6 7">1.97 nmol/min/ug enzyme with 5'-L-prolyl-floxuridine as substrate</Vmax>
        <Vmax evidence="5 6 7">0.92 nmol/min/ug enzyme with 5'-L-leucyl-floxuridine as substrate</Vmax>
        <Vmax evidence="5 6 7">4.53 nmol/min/ug enzyme with 3'-L-prolyl-floxuridine as substrate</Vmax>
        <Vmax evidence="5 6 7">0.7 nmol/min/ug enzyme with 3'-L-leucyl-floxuridine as substrate</Vmax>
        <Vmax evidence="5 6 7">0.59 nmol/min/ug enzyme with 3'-L-lysyl-floxuridine as substrate</Vmax>
        <Vmax evidence="5 6 7">1.11 nmol/min/ug enzyme with 5'-L-lysyl-floxuridine as substrate</Vmax>
        <Vmax evidence="5 6 7">0.16 nmol/min/ug enzyme with 3'-L-isoleucyl-floxuridine as substrate</Vmax>
        <Vmax evidence="5 6 7">0.33 nmol/min/ug enzyme with 5'-L-aspartyl-floxuridine as substrate</Vmax>
        <Vmax evidence="5 6 7">0.1 nmol/min/ug enzyme with 3'-L-aspartyl-floxuridine as substrate</Vmax>
        <Vmax evidence="5 6 7">0.3 nmol/min/ug enzyme with 5'-D-valyl-floxuridine as substrate</Vmax>
        <Vmax evidence="5 6 7">0.19 nmol/min/ug enzyme with 3'-L-valyl-floxuridine as substrate</Vmax>
        <Vmax evidence="5 6 7">0.21 nmol/min/ug enzyme with 5'-L-valyl-floxuridine as substrate</Vmax>
        <Vmax evidence="5 6 7">0.15 nmol/min/ug enzyme with 5'-L-isoleucyl-floxuridine as substrate</Vmax>
        <Vmax evidence="5 6 7">0.27 nmol/min/ug enzyme with 3'-D-valyl-floxuridine as substrate</Vmax>
        <Vmax evidence="5 6 7">283.52 nmol/min/ug enzyme with 3'-L-phenylalanyl-gemcitabine as substrate</Vmax>
        <Vmax evidence="5 6 7">406.92 nmol/min/ug enzyme with 3'-D-phenylalanyl-gemcitabine as substrate</Vmax>
        <Vmax evidence="5 6 7">3.25 nmol/min/ug enzyme with 5'-L-phenylalanyl-gemcitabine as substrate</Vmax>
        <Vmax evidence="5 6 7">3.19 nmol/min/ug enzyme with 5'-D-phenylalanyl-gemcitabine as substrate</Vmax>
        <Vmax evidence="5 6 7">0.35 nmol/min/ug enzyme with 3'-L-valyl-gemcitabine as substrate</Vmax>
        <Vmax evidence="5 6 7">0.24 nmol/min/ug enzyme with 3'-L-isoleucyl-gemcitabine as substrate</Vmax>
        <Vmax evidence="5 6 7">0.32 nmol/min/ug enzyme with 3'-D-valyl-gemcitabine as substrate</Vmax>
        <Vmax evidence="5 6 7">0.09 nmol/min/ug enzyme with 5'-L-isoleucyl-gemcitabine as substrate</Vmax>
        <Vmax evidence="5 6 7">0.13 nmol/min/ug enzyme with 5'-D-valyl-gemcitabine as substrate</Vmax>
        <Vmax evidence="5 6 7">0.12 nmol/min/ug enzyme with 5'-L-valyl-gemcitabine as substrate</Vmax>
        <Vmax evidence="5 6 7">2.33 nmol/min/ug enzyme with 5'-L-phenylalanyl-BDCRB as substrate</Vmax>
        <Vmax evidence="5 6 7">1.6 nmol/min/ug enzyme with 5'-D-phenylalanyl-BDCRB as substrate</Vmax>
        <Vmax evidence="5 6 7">82.25 nmol/min/ug enzyme with pNPB as substrate</Vmax>
        <Vmax evidence="5 6 7">60.45 nmol/min/ug enzyme with pNPA as substrate</Vmax>
        <Vmax evidence="5 6 7">11859.78 nmol/min/ug enzyme with PHEE as substrate</Vmax>
        <Vmax evidence="5 6 7">7.24 nmol/min/ug enzyme with PHBE as substrate</Vmax>
        <Vmax evidence="5 6 7">1.29 nmol/min/ug enzyme with AcPHEE as substrate</Vmax>
        <Vmax evidence="5 6 7">4.0 nmol/min/ug enzyme with 5' cinn-floxuridine as substrate</Vmax>
        <Vmax evidence="5 6 7">0.03 nmol/min/ug enzyme with CPT-11 as substrate</Vmax>
    </kinetics>
    <phDependence>
        <text evidence="5 6 7">Optimum pH is 8.0 with tributylglycerol as substrate, and 8.2 with retinyl palmitate as substrate. Active from pH 4.5-9.5 with retinyl palmitate as substrate.</text>
    </phDependence>
</comment>
<comment type="subcellular location">
    <subcellularLocation>
        <location>Endoplasmic reticulum lumen</location>
    </subcellularLocation>
</comment>
<comment type="similarity">
    <text evidence="8">Belongs to the type-B carboxylesterase/lipase family.</text>
</comment>
<reference key="1">
    <citation type="journal article" date="1991" name="FEBS Lett.">
        <title>The nucleotide and deduced amino acid sequences of porcine liver proline-beta-naphthylamidase. Evidence for the identity with carboxylesterase.</title>
        <authorList>
            <person name="Matsushima M."/>
            <person name="Inoue H."/>
            <person name="Ichinose M."/>
            <person name="Tsukada S."/>
            <person name="Miki K."/>
            <person name="Kurokawa K."/>
            <person name="Takahashi T."/>
            <person name="Takahashi K."/>
        </authorList>
    </citation>
    <scope>NUCLEOTIDE SEQUENCE [MRNA]</scope>
    <source>
        <tissue>Liver</tissue>
    </source>
</reference>
<reference key="2">
    <citation type="journal article" date="1998" name="Eur. J. Biochem.">
        <title>Purification and molecular cloning of porcine intestinal glycerol-ester hydrolase -- evidence for its identity with carboxylesterase.</title>
        <authorList>
            <person name="David L."/>
            <person name="Guo X.-J."/>
            <person name="Villard C."/>
            <person name="Moulin A."/>
            <person name="Puigserver A."/>
        </authorList>
    </citation>
    <scope>NUCLEOTIDE SEQUENCE [MRNA]</scope>
    <scope>PROTEIN SEQUENCE OF 19-44</scope>
    <scope>FUNCTION</scope>
    <scope>CATALYTIC ACTIVITY</scope>
    <scope>ACTIVITY REGULATION</scope>
    <scope>BIOPHYSICOCHEMICAL PROPERTIES</scope>
    <source>
        <tissue>Intestinal mucosa</tissue>
    </source>
</reference>
<reference key="3">
    <citation type="journal article" date="1998" name="Eur. J. Biochem.">
        <title>Purification and characterization of retinyl ester hydrolase as a member of the non-specific carboxylesterase supergene family.</title>
        <authorList>
            <person name="Schindler R."/>
            <person name="Mentlein R."/>
            <person name="Feldheim W."/>
        </authorList>
    </citation>
    <scope>PROTEIN SEQUENCE OF 19-29; 66-79; 84-90; 314-326; 384-401 AND 438-452</scope>
    <scope>FUNCTION</scope>
    <scope>CATALYTIC ACTIVITY</scope>
    <scope>ACTIVITY REGULATION</scope>
    <scope>BIOPHYSICOCHEMICAL PROPERTIES</scope>
    <source>
        <tissue>Liver</tissue>
    </source>
</reference>
<reference key="4">
    <citation type="journal article" date="2006" name="J. Pharmacol. Exp. Ther.">
        <title>Nucleoside ester prodrug substrate specificity of liver carboxylesterase.</title>
        <authorList>
            <person name="Landowski C.P."/>
            <person name="Lorenzi P.L."/>
            <person name="Song X."/>
            <person name="Amidon G.L."/>
        </authorList>
    </citation>
    <scope>FUNCTION</scope>
    <scope>CATALYTIC ACTIVITY</scope>
    <scope>BIOPHYSICOCHEMICAL PROPERTIES</scope>
</reference>
<dbReference type="EC" id="3.1.1.1"/>
<dbReference type="EMBL" id="X63323">
    <property type="protein sequence ID" value="CAA44929.1"/>
    <property type="molecule type" value="mRNA"/>
</dbReference>
<dbReference type="EMBL" id="AF064741">
    <property type="protein sequence ID" value="AAC70013.1"/>
    <property type="molecule type" value="mRNA"/>
</dbReference>
<dbReference type="PIR" id="S19307">
    <property type="entry name" value="S19307"/>
</dbReference>
<dbReference type="RefSeq" id="NP_001302695.1">
    <property type="nucleotide sequence ID" value="NM_001315766.1"/>
</dbReference>
<dbReference type="RefSeq" id="XP_013850047.1">
    <property type="nucleotide sequence ID" value="XM_013994593.1"/>
</dbReference>
<dbReference type="PDB" id="5FV4">
    <property type="method" value="X-ray"/>
    <property type="resolution" value="2.40 A"/>
    <property type="chains" value="A/B/C/D/E/F=19-562"/>
</dbReference>
<dbReference type="PDBsum" id="5FV4"/>
<dbReference type="SMR" id="Q29550"/>
<dbReference type="FunCoup" id="Q29550">
    <property type="interactions" value="696"/>
</dbReference>
<dbReference type="STRING" id="9823.ENSSSCP00000040296"/>
<dbReference type="BindingDB" id="Q29550"/>
<dbReference type="ChEMBL" id="CHEMBL3383"/>
<dbReference type="DrugCentral" id="Q29550"/>
<dbReference type="ESTHER" id="pig-EST1">
    <property type="family name" value="Carb_B_Chordata"/>
</dbReference>
<dbReference type="MEROPS" id="S09.981"/>
<dbReference type="GlyGen" id="Q29550">
    <property type="glycosylation" value="1 site"/>
</dbReference>
<dbReference type="PaxDb" id="9823-ENSSSCP00000003045"/>
<dbReference type="PeptideAtlas" id="Q29550"/>
<dbReference type="GeneID" id="100736962"/>
<dbReference type="KEGG" id="ssc:100736962"/>
<dbReference type="eggNOG" id="KOG1516">
    <property type="taxonomic scope" value="Eukaryota"/>
</dbReference>
<dbReference type="InParanoid" id="Q29550"/>
<dbReference type="OrthoDB" id="3200163at2759"/>
<dbReference type="SABIO-RK" id="Q29550"/>
<dbReference type="PRO" id="PR:Q29550"/>
<dbReference type="Proteomes" id="UP000008227">
    <property type="component" value="Unplaced"/>
</dbReference>
<dbReference type="Proteomes" id="UP000314985">
    <property type="component" value="Unplaced"/>
</dbReference>
<dbReference type="Proteomes" id="UP000694570">
    <property type="component" value="Unplaced"/>
</dbReference>
<dbReference type="Proteomes" id="UP000694571">
    <property type="component" value="Unplaced"/>
</dbReference>
<dbReference type="Proteomes" id="UP000694720">
    <property type="component" value="Unplaced"/>
</dbReference>
<dbReference type="Proteomes" id="UP000694722">
    <property type="component" value="Unplaced"/>
</dbReference>
<dbReference type="Proteomes" id="UP000694723">
    <property type="component" value="Unplaced"/>
</dbReference>
<dbReference type="Proteomes" id="UP000694724">
    <property type="component" value="Unplaced"/>
</dbReference>
<dbReference type="Proteomes" id="UP000694725">
    <property type="component" value="Unplaced"/>
</dbReference>
<dbReference type="Proteomes" id="UP000694726">
    <property type="component" value="Unplaced"/>
</dbReference>
<dbReference type="Proteomes" id="UP000694727">
    <property type="component" value="Unplaced"/>
</dbReference>
<dbReference type="Proteomes" id="UP000694728">
    <property type="component" value="Unplaced"/>
</dbReference>
<dbReference type="GO" id="GO:0005783">
    <property type="term" value="C:endoplasmic reticulum"/>
    <property type="evidence" value="ECO:0000318"/>
    <property type="project" value="GO_Central"/>
</dbReference>
<dbReference type="GO" id="GO:0005788">
    <property type="term" value="C:endoplasmic reticulum lumen"/>
    <property type="evidence" value="ECO:0007669"/>
    <property type="project" value="UniProtKB-SubCell"/>
</dbReference>
<dbReference type="GO" id="GO:0005811">
    <property type="term" value="C:lipid droplet"/>
    <property type="evidence" value="ECO:0000318"/>
    <property type="project" value="GO_Central"/>
</dbReference>
<dbReference type="GO" id="GO:0106435">
    <property type="term" value="F:carboxylesterase activity"/>
    <property type="evidence" value="ECO:0007669"/>
    <property type="project" value="UniProtKB-EC"/>
</dbReference>
<dbReference type="GO" id="GO:0052689">
    <property type="term" value="F:carboxylic ester hydrolase activity"/>
    <property type="evidence" value="ECO:0000318"/>
    <property type="project" value="GO_Central"/>
</dbReference>
<dbReference type="GO" id="GO:0016042">
    <property type="term" value="P:lipid catabolic process"/>
    <property type="evidence" value="ECO:0000318"/>
    <property type="project" value="GO_Central"/>
</dbReference>
<dbReference type="CDD" id="cd00312">
    <property type="entry name" value="Esterase_lipase"/>
    <property type="match status" value="1"/>
</dbReference>
<dbReference type="FunFam" id="3.40.50.1820:FF:000011">
    <property type="entry name" value="Carboxylic ester hydrolase"/>
    <property type="match status" value="1"/>
</dbReference>
<dbReference type="Gene3D" id="3.40.50.1820">
    <property type="entry name" value="alpha/beta hydrolase"/>
    <property type="match status" value="1"/>
</dbReference>
<dbReference type="InterPro" id="IPR029058">
    <property type="entry name" value="AB_hydrolase_fold"/>
</dbReference>
<dbReference type="InterPro" id="IPR002018">
    <property type="entry name" value="CarbesteraseB"/>
</dbReference>
<dbReference type="InterPro" id="IPR019826">
    <property type="entry name" value="Carboxylesterase_B_AS"/>
</dbReference>
<dbReference type="InterPro" id="IPR019819">
    <property type="entry name" value="Carboxylesterase_B_CS"/>
</dbReference>
<dbReference type="InterPro" id="IPR050309">
    <property type="entry name" value="Type-B_Carboxylest/Lipase"/>
</dbReference>
<dbReference type="PANTHER" id="PTHR11559">
    <property type="entry name" value="CARBOXYLESTERASE"/>
    <property type="match status" value="1"/>
</dbReference>
<dbReference type="Pfam" id="PF00135">
    <property type="entry name" value="COesterase"/>
    <property type="match status" value="1"/>
</dbReference>
<dbReference type="SUPFAM" id="SSF53474">
    <property type="entry name" value="alpha/beta-Hydrolases"/>
    <property type="match status" value="1"/>
</dbReference>
<dbReference type="PROSITE" id="PS00122">
    <property type="entry name" value="CARBOXYLESTERASE_B_1"/>
    <property type="match status" value="1"/>
</dbReference>
<dbReference type="PROSITE" id="PS00941">
    <property type="entry name" value="CARBOXYLESTERASE_B_2"/>
    <property type="match status" value="1"/>
</dbReference>
<organism>
    <name type="scientific">Sus scrofa</name>
    <name type="common">Pig</name>
    <dbReference type="NCBI Taxonomy" id="9823"/>
    <lineage>
        <taxon>Eukaryota</taxon>
        <taxon>Metazoa</taxon>
        <taxon>Chordata</taxon>
        <taxon>Craniata</taxon>
        <taxon>Vertebrata</taxon>
        <taxon>Euteleostomi</taxon>
        <taxon>Mammalia</taxon>
        <taxon>Eutheria</taxon>
        <taxon>Laurasiatheria</taxon>
        <taxon>Artiodactyla</taxon>
        <taxon>Suina</taxon>
        <taxon>Suidae</taxon>
        <taxon>Sus</taxon>
    </lineage>
</organism>
<accession>Q29550</accession>
<accession>O97582</accession>
<accession>P82128</accession>